<comment type="function">
    <text evidence="1 2">May function in innate immunity through activation of the lectin complement pathway. Binds to GalNAc and GlcNAc carbohydrate moieties.</text>
</comment>
<comment type="subunit">
    <text evidence="1 2">Homotrimer. May form higher-order oligomers.</text>
</comment>
<comment type="subcellular location">
    <subcellularLocation>
        <location evidence="2">Secreted</location>
    </subcellularLocation>
</comment>
<comment type="tissue specificity">
    <text evidence="6">Expressed in peripheral blood leukocytes. Also detected at lower levels in spleen and lung.</text>
</comment>
<comment type="domain">
    <text evidence="1">The fibrinogen C-terminal domain mediates calcium-dependent binding to carbohydrates. The domain undergoes a conformational switch at pH under 6.2, and loses its carbohydrate-binding ability.</text>
</comment>
<comment type="PTM">
    <text evidence="2">N-glycosylated.</text>
</comment>
<comment type="similarity">
    <text evidence="8">Belongs to the ficolin lectin family.</text>
</comment>
<feature type="signal peptide" evidence="2">
    <location>
        <begin position="1"/>
        <end position="19"/>
    </location>
</feature>
<feature type="chain" id="PRO_5004295318" description="Ficolin-1-B">
    <location>
        <begin position="20"/>
        <end position="318"/>
    </location>
</feature>
<feature type="domain" description="Collagen-like" evidence="3">
    <location>
        <begin position="42"/>
        <end position="99"/>
    </location>
</feature>
<feature type="domain" description="Fibrinogen C-terminal" evidence="5">
    <location>
        <begin position="100"/>
        <end position="318"/>
    </location>
</feature>
<feature type="binding site" evidence="1">
    <location>
        <position position="253"/>
    </location>
    <ligand>
        <name>Ca(2+)</name>
        <dbReference type="ChEBI" id="CHEBI:29108"/>
    </ligand>
</feature>
<feature type="binding site" evidence="1">
    <location>
        <position position="255"/>
    </location>
    <ligand>
        <name>Ca(2+)</name>
        <dbReference type="ChEBI" id="CHEBI:29108"/>
    </ligand>
</feature>
<feature type="binding site" evidence="1">
    <location>
        <position position="257"/>
    </location>
    <ligand>
        <name>Ca(2+)</name>
        <dbReference type="ChEBI" id="CHEBI:29108"/>
    </ligand>
</feature>
<feature type="binding site" evidence="1">
    <location>
        <begin position="273"/>
        <end position="275"/>
    </location>
    <ligand>
        <name>a carbohydrate</name>
        <dbReference type="ChEBI" id="CHEBI:16646"/>
    </ligand>
</feature>
<feature type="glycosylation site" description="N-linked (GlcNAc...) asparagine" evidence="4">
    <location>
        <position position="205"/>
    </location>
</feature>
<feature type="glycosylation site" description="N-linked (GlcNAc...) asparagine" evidence="4">
    <location>
        <position position="222"/>
    </location>
</feature>
<feature type="glycosylation site" description="N-linked (GlcNAc...) asparagine" evidence="4">
    <location>
        <position position="254"/>
    </location>
</feature>
<feature type="glycosylation site" description="N-linked (GlcNAc...) asparagine" evidence="4">
    <location>
        <position position="287"/>
    </location>
</feature>
<feature type="disulfide bond" evidence="5">
    <location>
        <begin position="109"/>
        <end position="137"/>
    </location>
</feature>
<feature type="disulfide bond" evidence="5">
    <location>
        <begin position="261"/>
        <end position="274"/>
    </location>
</feature>
<proteinExistence type="evidence at transcript level"/>
<dbReference type="EMBL" id="AB091342">
    <property type="protein sequence ID" value="BAC76378.1"/>
    <property type="molecule type" value="mRNA"/>
</dbReference>
<dbReference type="RefSeq" id="NP_001079139.1">
    <property type="nucleotide sequence ID" value="NM_001085670.1"/>
</dbReference>
<dbReference type="SMR" id="Q7ZT72"/>
<dbReference type="GlyCosmos" id="Q7ZT72">
    <property type="glycosylation" value="4 sites, No reported glycans"/>
</dbReference>
<dbReference type="GeneID" id="373683"/>
<dbReference type="KEGG" id="xla:373683"/>
<dbReference type="AGR" id="Xenbase:XB-GENE-6252862"/>
<dbReference type="CTD" id="373683"/>
<dbReference type="Xenbase" id="XB-GENE-6252862">
    <property type="gene designation" value="fcn1.S"/>
</dbReference>
<dbReference type="OrthoDB" id="7735550at2759"/>
<dbReference type="Proteomes" id="UP000186698">
    <property type="component" value="Chromosome 8S"/>
</dbReference>
<dbReference type="Bgee" id="373683">
    <property type="expression patterns" value="Expressed in internal ear and 4 other cell types or tissues"/>
</dbReference>
<dbReference type="GO" id="GO:0005581">
    <property type="term" value="C:collagen trimer"/>
    <property type="evidence" value="ECO:0007669"/>
    <property type="project" value="UniProtKB-KW"/>
</dbReference>
<dbReference type="GO" id="GO:0062023">
    <property type="term" value="C:collagen-containing extracellular matrix"/>
    <property type="evidence" value="ECO:0000318"/>
    <property type="project" value="GO_Central"/>
</dbReference>
<dbReference type="GO" id="GO:0005615">
    <property type="term" value="C:extracellular space"/>
    <property type="evidence" value="ECO:0000318"/>
    <property type="project" value="GO_Central"/>
</dbReference>
<dbReference type="GO" id="GO:0003823">
    <property type="term" value="F:antigen binding"/>
    <property type="evidence" value="ECO:0000318"/>
    <property type="project" value="GO_Central"/>
</dbReference>
<dbReference type="GO" id="GO:0030246">
    <property type="term" value="F:carbohydrate binding"/>
    <property type="evidence" value="ECO:0007669"/>
    <property type="project" value="UniProtKB-KW"/>
</dbReference>
<dbReference type="GO" id="GO:0097367">
    <property type="term" value="F:carbohydrate derivative binding"/>
    <property type="evidence" value="ECO:0000318"/>
    <property type="project" value="GO_Central"/>
</dbReference>
<dbReference type="GO" id="GO:0046872">
    <property type="term" value="F:metal ion binding"/>
    <property type="evidence" value="ECO:0007669"/>
    <property type="project" value="UniProtKB-KW"/>
</dbReference>
<dbReference type="GO" id="GO:0005102">
    <property type="term" value="F:signaling receptor binding"/>
    <property type="evidence" value="ECO:0000318"/>
    <property type="project" value="GO_Central"/>
</dbReference>
<dbReference type="GO" id="GO:0001867">
    <property type="term" value="P:complement activation, lectin pathway"/>
    <property type="evidence" value="ECO:0000318"/>
    <property type="project" value="GO_Central"/>
</dbReference>
<dbReference type="CDD" id="cd00087">
    <property type="entry name" value="FReD"/>
    <property type="match status" value="1"/>
</dbReference>
<dbReference type="FunFam" id="3.90.215.10:FF:000001">
    <property type="entry name" value="Tenascin isoform 1"/>
    <property type="match status" value="1"/>
</dbReference>
<dbReference type="Gene3D" id="3.90.215.10">
    <property type="entry name" value="Gamma Fibrinogen, chain A, domain 1"/>
    <property type="match status" value="1"/>
</dbReference>
<dbReference type="InterPro" id="IPR008160">
    <property type="entry name" value="Collagen"/>
</dbReference>
<dbReference type="InterPro" id="IPR036056">
    <property type="entry name" value="Fibrinogen-like_C"/>
</dbReference>
<dbReference type="InterPro" id="IPR014716">
    <property type="entry name" value="Fibrinogen_a/b/g_C_1"/>
</dbReference>
<dbReference type="InterPro" id="IPR002181">
    <property type="entry name" value="Fibrinogen_a/b/g_C_dom"/>
</dbReference>
<dbReference type="InterPro" id="IPR050373">
    <property type="entry name" value="Fibrinogen_C-term_domain"/>
</dbReference>
<dbReference type="InterPro" id="IPR020837">
    <property type="entry name" value="Fibrinogen_CS"/>
</dbReference>
<dbReference type="NCBIfam" id="NF040941">
    <property type="entry name" value="GGGWT_bact"/>
    <property type="match status" value="1"/>
</dbReference>
<dbReference type="PANTHER" id="PTHR19143">
    <property type="entry name" value="FIBRINOGEN/TENASCIN/ANGIOPOEITIN"/>
    <property type="match status" value="1"/>
</dbReference>
<dbReference type="PANTHER" id="PTHR19143:SF448">
    <property type="entry name" value="FICOLIN-1-B"/>
    <property type="match status" value="1"/>
</dbReference>
<dbReference type="Pfam" id="PF01391">
    <property type="entry name" value="Collagen"/>
    <property type="match status" value="1"/>
</dbReference>
<dbReference type="Pfam" id="PF00147">
    <property type="entry name" value="Fibrinogen_C"/>
    <property type="match status" value="1"/>
</dbReference>
<dbReference type="SMART" id="SM00186">
    <property type="entry name" value="FBG"/>
    <property type="match status" value="1"/>
</dbReference>
<dbReference type="SUPFAM" id="SSF56496">
    <property type="entry name" value="Fibrinogen C-terminal domain-like"/>
    <property type="match status" value="1"/>
</dbReference>
<dbReference type="PROSITE" id="PS00514">
    <property type="entry name" value="FIBRINOGEN_C_1"/>
    <property type="match status" value="1"/>
</dbReference>
<dbReference type="PROSITE" id="PS51406">
    <property type="entry name" value="FIBRINOGEN_C_2"/>
    <property type="match status" value="1"/>
</dbReference>
<protein>
    <recommendedName>
        <fullName evidence="8">Ficolin-1-B</fullName>
    </recommendedName>
</protein>
<gene>
    <name evidence="8" type="primary">fcn1-b</name>
    <name evidence="7" type="synonym">fcn-4</name>
</gene>
<accession>Q7ZT72</accession>
<name>FCN1B_XENLA</name>
<sequence>MTRWVQTFLLLVAVIRSYAEDSCPDVKVIGVGASDKLTILRGCPGIPGVPGPQGPSGPAGAKGEKGFPGIPGKMGPTGLKGERGISGPKGQKGDKGDPGIPVVGMAQNCKEWLDQGASISGWYTIYTTNGLSLTVLCDMETDGGGWIVFQRRMDGSVDFFQDWISYKRGFGRQDSEFWLGNNNLHLLTVTGSFQLRVDLTDFGNNRTSASYSDFRIAAEAQNYTLSLGTFTGGDAGDSLYGHKNKGFSTKDRDNDSSPASCAERYRGAWWYTSCHSSNLNGLYLRGNHSSFANGVNWKSGRGYKYSYEVSEIKFRPQP</sequence>
<reference evidence="9" key="1">
    <citation type="journal article" date="2003" name="Immunogenetics">
        <title>Molecular cloning and characterization of novel ficolins from Xenopus laevis.</title>
        <authorList>
            <person name="Kakinuma Y."/>
            <person name="Endo Y."/>
            <person name="Takahashi M."/>
            <person name="Nakata M."/>
            <person name="Matsushita M."/>
            <person name="Takenoshita S."/>
            <person name="Fujita T."/>
        </authorList>
    </citation>
    <scope>NUCLEOTIDE SEQUENCE [MRNA]</scope>
    <scope>TISSUE SPECIFICITY</scope>
    <source>
        <tissue evidence="9">Liver</tissue>
    </source>
</reference>
<evidence type="ECO:0000250" key="1">
    <source>
        <dbReference type="UniProtKB" id="O00602"/>
    </source>
</evidence>
<evidence type="ECO:0000250" key="2">
    <source>
        <dbReference type="UniProtKB" id="Q7ZT75"/>
    </source>
</evidence>
<evidence type="ECO:0000255" key="3"/>
<evidence type="ECO:0000255" key="4">
    <source>
        <dbReference type="PROSITE-ProRule" id="PRU00498"/>
    </source>
</evidence>
<evidence type="ECO:0000255" key="5">
    <source>
        <dbReference type="PROSITE-ProRule" id="PRU00739"/>
    </source>
</evidence>
<evidence type="ECO:0000269" key="6">
    <source>
    </source>
</evidence>
<evidence type="ECO:0000303" key="7">
    <source>
    </source>
</evidence>
<evidence type="ECO:0000305" key="8"/>
<evidence type="ECO:0000312" key="9">
    <source>
        <dbReference type="EMBL" id="BAC76378.1"/>
    </source>
</evidence>
<organism evidence="9">
    <name type="scientific">Xenopus laevis</name>
    <name type="common">African clawed frog</name>
    <dbReference type="NCBI Taxonomy" id="8355"/>
    <lineage>
        <taxon>Eukaryota</taxon>
        <taxon>Metazoa</taxon>
        <taxon>Chordata</taxon>
        <taxon>Craniata</taxon>
        <taxon>Vertebrata</taxon>
        <taxon>Euteleostomi</taxon>
        <taxon>Amphibia</taxon>
        <taxon>Batrachia</taxon>
        <taxon>Anura</taxon>
        <taxon>Pipoidea</taxon>
        <taxon>Pipidae</taxon>
        <taxon>Xenopodinae</taxon>
        <taxon>Xenopus</taxon>
        <taxon>Xenopus</taxon>
    </lineage>
</organism>
<keyword id="KW-0106">Calcium</keyword>
<keyword id="KW-0176">Collagen</keyword>
<keyword id="KW-1015">Disulfide bond</keyword>
<keyword id="KW-0325">Glycoprotein</keyword>
<keyword id="KW-0391">Immunity</keyword>
<keyword id="KW-0399">Innate immunity</keyword>
<keyword id="KW-0430">Lectin</keyword>
<keyword id="KW-0479">Metal-binding</keyword>
<keyword id="KW-1185">Reference proteome</keyword>
<keyword id="KW-0964">Secreted</keyword>
<keyword id="KW-0732">Signal</keyword>